<feature type="chain" id="PRO_0000448459" description="Collagen alpha-2(I) chain">
    <location>
        <begin position="1"/>
        <end position="977"/>
    </location>
</feature>
<feature type="region of interest" description="Disordered" evidence="2">
    <location>
        <begin position="1"/>
        <end position="977"/>
    </location>
</feature>
<feature type="compositionally biased region" description="Low complexity" evidence="2">
    <location>
        <begin position="17"/>
        <end position="66"/>
    </location>
</feature>
<feature type="compositionally biased region" description="Low complexity" evidence="2">
    <location>
        <begin position="138"/>
        <end position="159"/>
    </location>
</feature>
<feature type="compositionally biased region" description="Low complexity" evidence="2">
    <location>
        <begin position="205"/>
        <end position="226"/>
    </location>
</feature>
<feature type="compositionally biased region" description="Gly residues" evidence="2">
    <location>
        <begin position="258"/>
        <end position="267"/>
    </location>
</feature>
<feature type="compositionally biased region" description="Low complexity" evidence="2">
    <location>
        <begin position="268"/>
        <end position="278"/>
    </location>
</feature>
<feature type="compositionally biased region" description="Gly residues" evidence="2">
    <location>
        <begin position="300"/>
        <end position="309"/>
    </location>
</feature>
<feature type="compositionally biased region" description="Low complexity" evidence="2">
    <location>
        <begin position="322"/>
        <end position="338"/>
    </location>
</feature>
<feature type="compositionally biased region" description="Low complexity" evidence="2">
    <location>
        <begin position="373"/>
        <end position="392"/>
    </location>
</feature>
<feature type="compositionally biased region" description="Gly residues" evidence="2">
    <location>
        <begin position="441"/>
        <end position="450"/>
    </location>
</feature>
<feature type="compositionally biased region" description="Low complexity" evidence="2">
    <location>
        <begin position="497"/>
        <end position="514"/>
    </location>
</feature>
<feature type="compositionally biased region" description="Low complexity" evidence="2">
    <location>
        <begin position="526"/>
        <end position="536"/>
    </location>
</feature>
<feature type="compositionally biased region" description="Gly residues" evidence="2">
    <location>
        <begin position="537"/>
        <end position="546"/>
    </location>
</feature>
<feature type="compositionally biased region" description="Low complexity" evidence="2">
    <location>
        <begin position="569"/>
        <end position="605"/>
    </location>
</feature>
<feature type="compositionally biased region" description="Low complexity" evidence="2">
    <location>
        <begin position="620"/>
        <end position="640"/>
    </location>
</feature>
<feature type="compositionally biased region" description="Basic and acidic residues" evidence="2">
    <location>
        <begin position="641"/>
        <end position="650"/>
    </location>
</feature>
<feature type="compositionally biased region" description="Low complexity" evidence="2">
    <location>
        <begin position="658"/>
        <end position="668"/>
    </location>
</feature>
<feature type="compositionally biased region" description="Gly residues" evidence="2">
    <location>
        <begin position="678"/>
        <end position="687"/>
    </location>
</feature>
<feature type="compositionally biased region" description="Low complexity" evidence="2">
    <location>
        <begin position="689"/>
        <end position="698"/>
    </location>
</feature>
<feature type="compositionally biased region" description="Gly residues" evidence="2">
    <location>
        <begin position="735"/>
        <end position="744"/>
    </location>
</feature>
<feature type="compositionally biased region" description="Low complexity" evidence="2">
    <location>
        <begin position="752"/>
        <end position="779"/>
    </location>
</feature>
<feature type="compositionally biased region" description="Low complexity" evidence="2">
    <location>
        <begin position="787"/>
        <end position="797"/>
    </location>
</feature>
<feature type="compositionally biased region" description="Gly residues" evidence="2">
    <location>
        <begin position="798"/>
        <end position="817"/>
    </location>
</feature>
<feature type="compositionally biased region" description="Low complexity" evidence="2">
    <location>
        <begin position="853"/>
        <end position="871"/>
    </location>
</feature>
<feature type="compositionally biased region" description="Low complexity" evidence="2">
    <location>
        <begin position="878"/>
        <end position="898"/>
    </location>
</feature>
<feature type="compositionally biased region" description="Basic and acidic residues" evidence="2">
    <location>
        <begin position="902"/>
        <end position="913"/>
    </location>
</feature>
<feature type="modified residue" description="4-hydroxyproline" evidence="1">
    <location>
        <position position="10"/>
    </location>
</feature>
<feature type="modified residue" description="4-hydroxyproline" evidence="1">
    <location>
        <position position="13"/>
    </location>
</feature>
<feature type="modified residue" description="4-hydroxyproline" evidence="1">
    <location>
        <position position="28"/>
    </location>
</feature>
<feature type="modified residue" description="4-hydroxyproline" evidence="1">
    <location>
        <position position="34"/>
    </location>
</feature>
<feature type="modified residue" description="5-hydroxylysine; alternate" evidence="1">
    <location>
        <position position="91"/>
    </location>
</feature>
<feature type="modified residue" description="4-hydroxyproline" evidence="1">
    <location>
        <position position="344"/>
    </location>
</feature>
<feature type="modified residue" description="4-hydroxyproline" evidence="1">
    <location>
        <position position="347"/>
    </location>
</feature>
<feature type="glycosylation site" description="O-linked (Gal...) hydroxylysine; alternate" evidence="1">
    <location>
        <position position="91"/>
    </location>
</feature>
<feature type="unsure residue" description="L or I" evidence="4">
    <location>
        <position position="9"/>
    </location>
</feature>
<feature type="unsure residue" description="L or I" evidence="4">
    <location>
        <position position="21"/>
    </location>
</feature>
<feature type="unsure residue" description="L or I" evidence="4">
    <location>
        <position position="87"/>
    </location>
</feature>
<feature type="unsure residue" description="L or I" evidence="4">
    <location>
        <position position="99"/>
    </location>
</feature>
<feature type="unsure residue" description="L or I" evidence="4">
    <location>
        <position position="102"/>
    </location>
</feature>
<feature type="unsure residue" description="L or I" evidence="4">
    <location>
        <position position="123"/>
    </location>
</feature>
<feature type="unsure residue" description="L or I" evidence="4">
    <location>
        <position position="172"/>
    </location>
</feature>
<feature type="unsure residue" description="L or I" evidence="4">
    <location>
        <position position="192"/>
    </location>
</feature>
<feature type="unsure residue" description="L or I" evidence="4">
    <location>
        <position position="210"/>
    </location>
</feature>
<feature type="unsure residue" description="L or I" evidence="4">
    <location>
        <position position="219"/>
    </location>
</feature>
<feature type="unsure residue" description="L or I" evidence="4">
    <location>
        <position position="228"/>
    </location>
</feature>
<feature type="unsure residue" description="L or I" evidence="4">
    <location>
        <position position="247"/>
    </location>
</feature>
<feature type="unsure residue" description="L or I" evidence="4">
    <location>
        <position position="301"/>
    </location>
</feature>
<feature type="unsure residue" description="L or I" evidence="4">
    <location>
        <position position="310"/>
    </location>
</feature>
<feature type="unsure residue" description="L or I" evidence="4">
    <location>
        <position position="349"/>
    </location>
</feature>
<feature type="unsure residue" description="L or I" evidence="4">
    <location>
        <position position="355"/>
    </location>
</feature>
<feature type="unsure residue" description="L or I" evidence="4">
    <location>
        <position position="373"/>
    </location>
</feature>
<feature type="unsure residue" description="L or I" evidence="4">
    <location>
        <position position="418"/>
    </location>
</feature>
<feature type="unsure residue" description="L or I" evidence="4">
    <location>
        <position position="439"/>
    </location>
</feature>
<feature type="unsure residue" description="L or I" evidence="4">
    <location>
        <position position="460"/>
    </location>
</feature>
<feature type="unsure residue" description="L or I" evidence="4">
    <location>
        <position position="484"/>
    </location>
</feature>
<feature type="unsure residue" description="L or I" evidence="4">
    <location>
        <position position="544"/>
    </location>
</feature>
<feature type="unsure residue" description="L or I" evidence="4">
    <location>
        <position position="565"/>
    </location>
</feature>
<feature type="unsure residue" description="L or I" evidence="4">
    <location>
        <position position="653"/>
    </location>
</feature>
<feature type="unsure residue" description="L or I" evidence="4">
    <location>
        <position position="688"/>
    </location>
</feature>
<feature type="unsure residue" description="L or I" evidence="4">
    <location>
        <position position="721"/>
    </location>
</feature>
<feature type="unsure residue" description="L or I" evidence="4">
    <location>
        <position position="769"/>
    </location>
</feature>
<feature type="unsure residue" description="L or I" evidence="4">
    <location>
        <position position="770"/>
    </location>
</feature>
<feature type="unsure residue" description="L or I" evidence="4">
    <location>
        <position position="776"/>
    </location>
</feature>
<feature type="unsure residue" description="L or I" evidence="4">
    <location>
        <position position="778"/>
    </location>
</feature>
<feature type="unsure residue" description="L or I" evidence="4">
    <location>
        <position position="787"/>
    </location>
</feature>
<feature type="unsure residue" description="L or I" evidence="4">
    <location>
        <position position="800"/>
    </location>
</feature>
<feature type="unsure residue" description="L or I" evidence="4">
    <location>
        <position position="839"/>
    </location>
</feature>
<feature type="unsure residue" description="L or I" evidence="4">
    <location>
        <position position="916"/>
    </location>
</feature>
<feature type="unsure residue" description="L or I" evidence="4">
    <location>
        <position position="919"/>
    </location>
</feature>
<feature type="unsure residue" description="L or I" evidence="4">
    <location>
        <position position="922"/>
    </location>
</feature>
<feature type="non-consecutive residues" evidence="4">
    <location>
        <begin position="16"/>
        <end position="17"/>
    </location>
</feature>
<feature type="non-consecutive residues" evidence="4">
    <location>
        <begin position="68"/>
        <end position="69"/>
    </location>
</feature>
<feature type="non-consecutive residues" evidence="4">
    <location>
        <begin position="103"/>
        <end position="104"/>
    </location>
</feature>
<feature type="non-consecutive residues" evidence="4">
    <location>
        <begin position="238"/>
        <end position="239"/>
    </location>
</feature>
<feature type="non-consecutive residues" evidence="4">
    <location>
        <begin position="802"/>
        <end position="803"/>
    </location>
</feature>
<feature type="non-consecutive residues" evidence="4">
    <location>
        <begin position="813"/>
        <end position="814"/>
    </location>
</feature>
<feature type="non-consecutive residues" evidence="4">
    <location>
        <begin position="847"/>
        <end position="848"/>
    </location>
</feature>
<feature type="non-consecutive residues" evidence="4">
    <location>
        <begin position="914"/>
        <end position="915"/>
    </location>
</feature>
<feature type="non-terminal residue" evidence="4">
    <location>
        <position position="1"/>
    </location>
</feature>
<feature type="non-terminal residue" evidence="4">
    <location>
        <position position="977"/>
    </location>
</feature>
<evidence type="ECO:0000250" key="1">
    <source>
        <dbReference type="UniProtKB" id="P08123"/>
    </source>
</evidence>
<evidence type="ECO:0000256" key="2">
    <source>
        <dbReference type="SAM" id="MobiDB-lite"/>
    </source>
</evidence>
<evidence type="ECO:0000269" key="3">
    <source>
    </source>
</evidence>
<evidence type="ECO:0000303" key="4">
    <source>
    </source>
</evidence>
<evidence type="ECO:0000305" key="5"/>
<proteinExistence type="evidence at protein level"/>
<sequence>SGGFDFSFLPQPPQEKGPMGLMGPRGPPGASGAPGPQGFQGPAGEPGEPGQTGPAGARGPAGPPGKAGERGVVGPQGARGFPGTPGLPGFKGIRGHNGLDGLKGEPGAPGENGTPGQTGARGLPGERGRVGAPGPAGSRGSDGSVGPVGPAGPIGSAGPPGFPGAPGPKGELGPVGNTGPSGPAGPRGEQGLPGVSGPVGPPGNPGANGLTGAKGAAGLPGVAGAPGLPGPRGIPGPVSGATGARGLVGEPGPAGSKGESGGKGEPGSAGPQGPPGSSGEEGKRGPSGESGSTGPTGPPGLRGGPGSRGLPGADGRAGVIGPAGARGASGPAGVRGPSGDTGRPGEPGLMGARGLPGSPGNVGPAGKEGPAGLPGIDGRPGPIGPAGARGEAGNIGFPGPKGPAGDPGKAGEKGHAGLAGNRGAPGPDGNNGAQGPPGLQGVQGGKGEQGPAGPPGFQGLPGPAGTTGEAGKPGERGIPGEFGLPGPAGPRGERGPSGESGAVGPSGAIGSRGPSGPPGPDGNKGEPGVVGAPGTAGPAGSGGLPGERGAAGIPGGKGEKGETGLRGEVGTTGRDGARGAPGAVGAPGPAGATGDRGEAGAAGPAGPAGPRGGPGERGEVGPAGPNGFAGPAGAAGQPGAKGERGTKGPKGELGIVGPTGPVGSAGPAGPNGPAGPAGSRGDGGPPGLTGFPGAAGRTGPPGPSGITGPPGPPGAAGKEGLRGPRGDQGPVGRTGETGAGGPPGFTGEKGPSGEPGTAGPPGTAGPQGLLGAPGILGLPGSRGERGLPGVAGAVGEPGPLGIGPPGARGPSGAGVNGAPGEAGRDGNPGSDGPPGRDGLPGHKGERGAGNPGPVGAAGAPGPHGAVGPAGKHGNRGEPGPAGSVGPVGAVGPRGPSGPQGIRGDKGEAGDKGPRGLQGLPGLAGQHGDQGAPGPVGPAGPRGPAGPSGPPGKDGRTGHPGAVGPAGIRGSQGSQGPS</sequence>
<comment type="function">
    <text evidence="5">Type I collagen is a member of group I collagen (fibrillar forming collagen).</text>
</comment>
<comment type="subunit">
    <text evidence="1">Trimers of one alpha 2(I) and two alpha 1(I) chains. Interacts (via C-terminus) with TMEM131 (via PapD-L domain); the interaction is direct and is involved in assembly and TRAPPIII ER-to-Golgi transport complex-dependent secretion of collagen.</text>
</comment>
<comment type="subcellular location">
    <subcellularLocation>
        <location>Secreted</location>
    </subcellularLocation>
    <subcellularLocation>
        <location>Secreted</location>
        <location>Extracellular space</location>
    </subcellularLocation>
    <subcellularLocation>
        <location evidence="5">Secreted</location>
        <location evidence="5">Extracellular space</location>
        <location evidence="5">Extracellular matrix</location>
    </subcellularLocation>
</comment>
<comment type="tissue specificity">
    <text evidence="3">Expressed in bones.</text>
</comment>
<comment type="PTM">
    <text evidence="1">Prolines at the third position of the tripeptide repeating unit (G-X-Y) are hydroxylated in some or all of the chains.</text>
</comment>
<comment type="miscellaneous">
    <text evidence="3">These protein fragments were extracted from an ancient femur bone collected at Cueva Rosello in Peru.</text>
</comment>
<comment type="similarity">
    <text evidence="5">Belongs to the fibrillar collagen family.</text>
</comment>
<name>CO1A2_SCESW</name>
<protein>
    <recommendedName>
        <fullName evidence="4">Collagen alpha-2(I) chain</fullName>
    </recommendedName>
    <alternativeName>
        <fullName evidence="1">Alpha-2 type I collagen</fullName>
    </alternativeName>
</protein>
<reference evidence="5" key="1">
    <citation type="journal article" date="2019" name="Nat. Ecol. Evol.">
        <title>Palaeoproteomics resolves sloth relationships.</title>
        <authorList>
            <person name="Presslee S."/>
            <person name="Slater G.J."/>
            <person name="Pujos F."/>
            <person name="Forasiepi A.M."/>
            <person name="Fischer R."/>
            <person name="Molloy K."/>
            <person name="Mackie M."/>
            <person name="Olsen J.V."/>
            <person name="Kramarz A."/>
            <person name="Taglioretti M."/>
            <person name="Scaglia F."/>
            <person name="Lezcano M."/>
            <person name="Lanata J.L."/>
            <person name="Southon J."/>
            <person name="Feranec R."/>
            <person name="Bloch J."/>
            <person name="Hajduk A."/>
            <person name="Martin F.M."/>
            <person name="Salas Gismondi R."/>
            <person name="Reguero M."/>
            <person name="de Muizon C."/>
            <person name="Greenwood A."/>
            <person name="Chait B.T."/>
            <person name="Penkman K."/>
            <person name="Collins M."/>
            <person name="MacPhee R.D.E."/>
        </authorList>
    </citation>
    <scope>PROTEIN SEQUENCE</scope>
    <scope>TISSUE SPECIFICITY</scope>
    <scope>IDENTIFICATION BY MASS SPECTROMETRY</scope>
    <source>
        <tissue evidence="4">Bone</tissue>
    </source>
</reference>
<keyword id="KW-0903">Direct protein sequencing</keyword>
<keyword id="KW-0952">Extinct organism protein</keyword>
<keyword id="KW-0272">Extracellular matrix</keyword>
<keyword id="KW-0325">Glycoprotein</keyword>
<keyword id="KW-0379">Hydroxylation</keyword>
<keyword id="KW-0964">Secreted</keyword>
<dbReference type="GO" id="GO:0005576">
    <property type="term" value="C:extracellular region"/>
    <property type="evidence" value="ECO:0007669"/>
    <property type="project" value="UniProtKB-SubCell"/>
</dbReference>
<dbReference type="InterPro" id="IPR008160">
    <property type="entry name" value="Collagen"/>
</dbReference>
<dbReference type="InterPro" id="IPR050938">
    <property type="entry name" value="Collagen_Structural_Proteins"/>
</dbReference>
<dbReference type="PANTHER" id="PTHR37456:SF6">
    <property type="entry name" value="COLLAGEN ALPHA-1(XXIII) CHAIN-LIKE ISOFORM X2"/>
    <property type="match status" value="1"/>
</dbReference>
<dbReference type="PANTHER" id="PTHR37456">
    <property type="entry name" value="SI:CH211-266K2.1"/>
    <property type="match status" value="1"/>
</dbReference>
<dbReference type="Pfam" id="PF01391">
    <property type="entry name" value="Collagen"/>
    <property type="match status" value="5"/>
</dbReference>
<organism evidence="4">
    <name type="scientific">Scelidodon sp. (strain SLP-2019)</name>
    <name type="common">South American ground sloth</name>
    <dbReference type="NCBI Taxonomy" id="2546666"/>
    <lineage>
        <taxon>Eukaryota</taxon>
        <taxon>Metazoa</taxon>
        <taxon>Chordata</taxon>
        <taxon>Craniata</taxon>
        <taxon>Vertebrata</taxon>
        <taxon>Euteleostomi</taxon>
        <taxon>Mammalia</taxon>
        <taxon>Eutheria</taxon>
        <taxon>Xenarthra</taxon>
        <taxon>Pilosa</taxon>
        <taxon>Folivora</taxon>
        <taxon>Mylodontidae</taxon>
        <taxon>Scelidodon</taxon>
    </lineage>
</organism>
<accession>C0HLI8</accession>